<evidence type="ECO:0000255" key="1">
    <source>
        <dbReference type="HAMAP-Rule" id="MF_00183"/>
    </source>
</evidence>
<accession>Q3JCW9</accession>
<name>DXR_NITOC</name>
<feature type="chain" id="PRO_1000020283" description="1-deoxy-D-xylulose 5-phosphate reductoisomerase">
    <location>
        <begin position="1"/>
        <end position="393"/>
    </location>
</feature>
<feature type="binding site" evidence="1">
    <location>
        <position position="10"/>
    </location>
    <ligand>
        <name>NADPH</name>
        <dbReference type="ChEBI" id="CHEBI:57783"/>
    </ligand>
</feature>
<feature type="binding site" evidence="1">
    <location>
        <position position="11"/>
    </location>
    <ligand>
        <name>NADPH</name>
        <dbReference type="ChEBI" id="CHEBI:57783"/>
    </ligand>
</feature>
<feature type="binding site" evidence="1">
    <location>
        <position position="12"/>
    </location>
    <ligand>
        <name>NADPH</name>
        <dbReference type="ChEBI" id="CHEBI:57783"/>
    </ligand>
</feature>
<feature type="binding site" evidence="1">
    <location>
        <position position="13"/>
    </location>
    <ligand>
        <name>NADPH</name>
        <dbReference type="ChEBI" id="CHEBI:57783"/>
    </ligand>
</feature>
<feature type="binding site" evidence="1">
    <location>
        <position position="37"/>
    </location>
    <ligand>
        <name>NADPH</name>
        <dbReference type="ChEBI" id="CHEBI:57783"/>
    </ligand>
</feature>
<feature type="binding site" evidence="1">
    <location>
        <position position="124"/>
    </location>
    <ligand>
        <name>NADPH</name>
        <dbReference type="ChEBI" id="CHEBI:57783"/>
    </ligand>
</feature>
<feature type="binding site" evidence="1">
    <location>
        <position position="125"/>
    </location>
    <ligand>
        <name>1-deoxy-D-xylulose 5-phosphate</name>
        <dbReference type="ChEBI" id="CHEBI:57792"/>
    </ligand>
</feature>
<feature type="binding site" evidence="1">
    <location>
        <position position="126"/>
    </location>
    <ligand>
        <name>NADPH</name>
        <dbReference type="ChEBI" id="CHEBI:57783"/>
    </ligand>
</feature>
<feature type="binding site" evidence="1">
    <location>
        <position position="150"/>
    </location>
    <ligand>
        <name>Mn(2+)</name>
        <dbReference type="ChEBI" id="CHEBI:29035"/>
    </ligand>
</feature>
<feature type="binding site" evidence="1">
    <location>
        <position position="151"/>
    </location>
    <ligand>
        <name>1-deoxy-D-xylulose 5-phosphate</name>
        <dbReference type="ChEBI" id="CHEBI:57792"/>
    </ligand>
</feature>
<feature type="binding site" evidence="1">
    <location>
        <position position="152"/>
    </location>
    <ligand>
        <name>1-deoxy-D-xylulose 5-phosphate</name>
        <dbReference type="ChEBI" id="CHEBI:57792"/>
    </ligand>
</feature>
<feature type="binding site" evidence="1">
    <location>
        <position position="152"/>
    </location>
    <ligand>
        <name>Mn(2+)</name>
        <dbReference type="ChEBI" id="CHEBI:29035"/>
    </ligand>
</feature>
<feature type="binding site" evidence="1">
    <location>
        <position position="182"/>
    </location>
    <ligand>
        <name>1-deoxy-D-xylulose 5-phosphate</name>
        <dbReference type="ChEBI" id="CHEBI:57792"/>
    </ligand>
</feature>
<feature type="binding site" evidence="1">
    <location>
        <position position="205"/>
    </location>
    <ligand>
        <name>1-deoxy-D-xylulose 5-phosphate</name>
        <dbReference type="ChEBI" id="CHEBI:57792"/>
    </ligand>
</feature>
<feature type="binding site" evidence="1">
    <location>
        <position position="211"/>
    </location>
    <ligand>
        <name>NADPH</name>
        <dbReference type="ChEBI" id="CHEBI:57783"/>
    </ligand>
</feature>
<feature type="binding site" evidence="1">
    <location>
        <position position="218"/>
    </location>
    <ligand>
        <name>1-deoxy-D-xylulose 5-phosphate</name>
        <dbReference type="ChEBI" id="CHEBI:57792"/>
    </ligand>
</feature>
<feature type="binding site" evidence="1">
    <location>
        <position position="223"/>
    </location>
    <ligand>
        <name>1-deoxy-D-xylulose 5-phosphate</name>
        <dbReference type="ChEBI" id="CHEBI:57792"/>
    </ligand>
</feature>
<feature type="binding site" evidence="1">
    <location>
        <position position="224"/>
    </location>
    <ligand>
        <name>1-deoxy-D-xylulose 5-phosphate</name>
        <dbReference type="ChEBI" id="CHEBI:57792"/>
    </ligand>
</feature>
<feature type="binding site" evidence="1">
    <location>
        <position position="227"/>
    </location>
    <ligand>
        <name>1-deoxy-D-xylulose 5-phosphate</name>
        <dbReference type="ChEBI" id="CHEBI:57792"/>
    </ligand>
</feature>
<feature type="binding site" evidence="1">
    <location>
        <position position="227"/>
    </location>
    <ligand>
        <name>Mn(2+)</name>
        <dbReference type="ChEBI" id="CHEBI:29035"/>
    </ligand>
</feature>
<reference key="1">
    <citation type="journal article" date="2006" name="Appl. Environ. Microbiol.">
        <title>Complete genome sequence of the marine, chemolithoautotrophic, ammonia-oxidizing bacterium Nitrosococcus oceani ATCC 19707.</title>
        <authorList>
            <person name="Klotz M.G."/>
            <person name="Arp D.J."/>
            <person name="Chain P.S.G."/>
            <person name="El-Sheikh A.F."/>
            <person name="Hauser L.J."/>
            <person name="Hommes N.G."/>
            <person name="Larimer F.W."/>
            <person name="Malfatti S.A."/>
            <person name="Norton J.M."/>
            <person name="Poret-Peterson A.T."/>
            <person name="Vergez L.M."/>
            <person name="Ward B.B."/>
        </authorList>
    </citation>
    <scope>NUCLEOTIDE SEQUENCE [LARGE SCALE GENOMIC DNA]</scope>
    <source>
        <strain>ATCC 19707 / BCRC 17464 / JCM 30415 / NCIMB 11848 / C-107</strain>
    </source>
</reference>
<dbReference type="EC" id="1.1.1.267" evidence="1"/>
<dbReference type="EMBL" id="CP000127">
    <property type="protein sequence ID" value="ABA57327.1"/>
    <property type="molecule type" value="Genomic_DNA"/>
</dbReference>
<dbReference type="SMR" id="Q3JCW9"/>
<dbReference type="FunCoup" id="Q3JCW9">
    <property type="interactions" value="368"/>
</dbReference>
<dbReference type="STRING" id="323261.Noc_0814"/>
<dbReference type="KEGG" id="noc:Noc_0814"/>
<dbReference type="eggNOG" id="COG0743">
    <property type="taxonomic scope" value="Bacteria"/>
</dbReference>
<dbReference type="HOGENOM" id="CLU_035714_4_0_6"/>
<dbReference type="InParanoid" id="Q3JCW9"/>
<dbReference type="UniPathway" id="UPA00056">
    <property type="reaction ID" value="UER00092"/>
</dbReference>
<dbReference type="Proteomes" id="UP000006838">
    <property type="component" value="Chromosome"/>
</dbReference>
<dbReference type="GO" id="GO:0030604">
    <property type="term" value="F:1-deoxy-D-xylulose-5-phosphate reductoisomerase activity"/>
    <property type="evidence" value="ECO:0007669"/>
    <property type="project" value="UniProtKB-UniRule"/>
</dbReference>
<dbReference type="GO" id="GO:0030145">
    <property type="term" value="F:manganese ion binding"/>
    <property type="evidence" value="ECO:0007669"/>
    <property type="project" value="TreeGrafter"/>
</dbReference>
<dbReference type="GO" id="GO:0070402">
    <property type="term" value="F:NADPH binding"/>
    <property type="evidence" value="ECO:0007669"/>
    <property type="project" value="InterPro"/>
</dbReference>
<dbReference type="GO" id="GO:0051484">
    <property type="term" value="P:isopentenyl diphosphate biosynthetic process, methylerythritol 4-phosphate pathway involved in terpenoid biosynthetic process"/>
    <property type="evidence" value="ECO:0007669"/>
    <property type="project" value="TreeGrafter"/>
</dbReference>
<dbReference type="FunFam" id="3.40.50.720:FF:000045">
    <property type="entry name" value="1-deoxy-D-xylulose 5-phosphate reductoisomerase"/>
    <property type="match status" value="1"/>
</dbReference>
<dbReference type="Gene3D" id="1.10.1740.10">
    <property type="match status" value="1"/>
</dbReference>
<dbReference type="Gene3D" id="3.40.50.720">
    <property type="entry name" value="NAD(P)-binding Rossmann-like Domain"/>
    <property type="match status" value="1"/>
</dbReference>
<dbReference type="HAMAP" id="MF_00183">
    <property type="entry name" value="DXP_reductoisom"/>
    <property type="match status" value="1"/>
</dbReference>
<dbReference type="InterPro" id="IPR003821">
    <property type="entry name" value="DXP_reductoisomerase"/>
</dbReference>
<dbReference type="InterPro" id="IPR013644">
    <property type="entry name" value="DXP_reductoisomerase_C"/>
</dbReference>
<dbReference type="InterPro" id="IPR013512">
    <property type="entry name" value="DXP_reductoisomerase_N"/>
</dbReference>
<dbReference type="InterPro" id="IPR026877">
    <property type="entry name" value="DXPR_C"/>
</dbReference>
<dbReference type="InterPro" id="IPR036169">
    <property type="entry name" value="DXPR_C_sf"/>
</dbReference>
<dbReference type="InterPro" id="IPR036291">
    <property type="entry name" value="NAD(P)-bd_dom_sf"/>
</dbReference>
<dbReference type="NCBIfam" id="TIGR00243">
    <property type="entry name" value="Dxr"/>
    <property type="match status" value="1"/>
</dbReference>
<dbReference type="NCBIfam" id="NF003938">
    <property type="entry name" value="PRK05447.1-1"/>
    <property type="match status" value="1"/>
</dbReference>
<dbReference type="NCBIfam" id="NF009114">
    <property type="entry name" value="PRK12464.1"/>
    <property type="match status" value="1"/>
</dbReference>
<dbReference type="PANTHER" id="PTHR30525">
    <property type="entry name" value="1-DEOXY-D-XYLULOSE 5-PHOSPHATE REDUCTOISOMERASE"/>
    <property type="match status" value="1"/>
</dbReference>
<dbReference type="PANTHER" id="PTHR30525:SF0">
    <property type="entry name" value="1-DEOXY-D-XYLULOSE 5-PHOSPHATE REDUCTOISOMERASE, CHLOROPLASTIC"/>
    <property type="match status" value="1"/>
</dbReference>
<dbReference type="Pfam" id="PF08436">
    <property type="entry name" value="DXP_redisom_C"/>
    <property type="match status" value="1"/>
</dbReference>
<dbReference type="Pfam" id="PF02670">
    <property type="entry name" value="DXP_reductoisom"/>
    <property type="match status" value="1"/>
</dbReference>
<dbReference type="Pfam" id="PF13288">
    <property type="entry name" value="DXPR_C"/>
    <property type="match status" value="1"/>
</dbReference>
<dbReference type="PIRSF" id="PIRSF006205">
    <property type="entry name" value="Dxp_reductismrs"/>
    <property type="match status" value="1"/>
</dbReference>
<dbReference type="SUPFAM" id="SSF69055">
    <property type="entry name" value="1-deoxy-D-xylulose-5-phosphate reductoisomerase, C-terminal domain"/>
    <property type="match status" value="1"/>
</dbReference>
<dbReference type="SUPFAM" id="SSF55347">
    <property type="entry name" value="Glyceraldehyde-3-phosphate dehydrogenase-like, C-terminal domain"/>
    <property type="match status" value="1"/>
</dbReference>
<dbReference type="SUPFAM" id="SSF51735">
    <property type="entry name" value="NAD(P)-binding Rossmann-fold domains"/>
    <property type="match status" value="1"/>
</dbReference>
<protein>
    <recommendedName>
        <fullName evidence="1">1-deoxy-D-xylulose 5-phosphate reductoisomerase</fullName>
        <shortName evidence="1">DXP reductoisomerase</shortName>
        <ecNumber evidence="1">1.1.1.267</ecNumber>
    </recommendedName>
    <alternativeName>
        <fullName evidence="1">1-deoxyxylulose-5-phosphate reductoisomerase</fullName>
    </alternativeName>
    <alternativeName>
        <fullName evidence="1">2-C-methyl-D-erythritol 4-phosphate synthase</fullName>
    </alternativeName>
</protein>
<comment type="function">
    <text evidence="1">Catalyzes the NADPH-dependent rearrangement and reduction of 1-deoxy-D-xylulose-5-phosphate (DXP) to 2-C-methyl-D-erythritol 4-phosphate (MEP).</text>
</comment>
<comment type="catalytic activity">
    <reaction evidence="1">
        <text>2-C-methyl-D-erythritol 4-phosphate + NADP(+) = 1-deoxy-D-xylulose 5-phosphate + NADPH + H(+)</text>
        <dbReference type="Rhea" id="RHEA:13717"/>
        <dbReference type="ChEBI" id="CHEBI:15378"/>
        <dbReference type="ChEBI" id="CHEBI:57783"/>
        <dbReference type="ChEBI" id="CHEBI:57792"/>
        <dbReference type="ChEBI" id="CHEBI:58262"/>
        <dbReference type="ChEBI" id="CHEBI:58349"/>
        <dbReference type="EC" id="1.1.1.267"/>
    </reaction>
    <physiologicalReaction direction="right-to-left" evidence="1">
        <dbReference type="Rhea" id="RHEA:13719"/>
    </physiologicalReaction>
</comment>
<comment type="cofactor">
    <cofactor evidence="1">
        <name>Mg(2+)</name>
        <dbReference type="ChEBI" id="CHEBI:18420"/>
    </cofactor>
    <cofactor evidence="1">
        <name>Mn(2+)</name>
        <dbReference type="ChEBI" id="CHEBI:29035"/>
    </cofactor>
</comment>
<comment type="pathway">
    <text evidence="1">Isoprenoid biosynthesis; isopentenyl diphosphate biosynthesis via DXP pathway; isopentenyl diphosphate from 1-deoxy-D-xylulose 5-phosphate: step 1/6.</text>
</comment>
<comment type="similarity">
    <text evidence="1">Belongs to the DXR family.</text>
</comment>
<organism>
    <name type="scientific">Nitrosococcus oceani (strain ATCC 19707 / BCRC 17464 / JCM 30415 / NCIMB 11848 / C-107)</name>
    <dbReference type="NCBI Taxonomy" id="323261"/>
    <lineage>
        <taxon>Bacteria</taxon>
        <taxon>Pseudomonadati</taxon>
        <taxon>Pseudomonadota</taxon>
        <taxon>Gammaproteobacteria</taxon>
        <taxon>Chromatiales</taxon>
        <taxon>Chromatiaceae</taxon>
        <taxon>Nitrosococcus</taxon>
    </lineage>
</organism>
<proteinExistence type="inferred from homology"/>
<keyword id="KW-0414">Isoprene biosynthesis</keyword>
<keyword id="KW-0464">Manganese</keyword>
<keyword id="KW-0479">Metal-binding</keyword>
<keyword id="KW-0521">NADP</keyword>
<keyword id="KW-0560">Oxidoreductase</keyword>
<keyword id="KW-1185">Reference proteome</keyword>
<gene>
    <name evidence="1" type="primary">dxr</name>
    <name type="ordered locus">Noc_0814</name>
</gene>
<sequence>MIGVSILGSTGSIGMSTLDVLARYPERYRVQALSANRSVAQIYQQCLQFRPSQVVMVDPDAAEQLRQRLHPVVPEIEVSSGSEALETIVTSPDTDYVMAAIVGAAGLLPTLAAARAGKRILLANKESLVMSGQLFMSAVSESGAELLPIDSEHNALWQCMPAEGRELPLHRKGVRRILLTASGGPFRERALSELDNVTPDEACAHPNWSMGRKISVDSATMMNKGLEVIEACWLFDAAACQIEVVLHPQSVIHSMVDYVDGSVLAQLGNPDMRTPIAYGLAWPERMESGVTLLDLFAIGQLTFCQPDLQRFPCLGLAYAALERGGTCSTILNAANEVAVQAFLDQRIQFTQIPKLIEWTLGRVTPTVADSLPAVLESDAVARQVAKEQVERWY</sequence>